<evidence type="ECO:0000255" key="1">
    <source>
        <dbReference type="HAMAP-Rule" id="MF_00575"/>
    </source>
</evidence>
<evidence type="ECO:0000305" key="2"/>
<reference key="1">
    <citation type="journal article" date="2003" name="Nat. Genet.">
        <title>Comparative analysis of the genome sequences of Bordetella pertussis, Bordetella parapertussis and Bordetella bronchiseptica.</title>
        <authorList>
            <person name="Parkhill J."/>
            <person name="Sebaihia M."/>
            <person name="Preston A."/>
            <person name="Murphy L.D."/>
            <person name="Thomson N.R."/>
            <person name="Harris D.E."/>
            <person name="Holden M.T.G."/>
            <person name="Churcher C.M."/>
            <person name="Bentley S.D."/>
            <person name="Mungall K.L."/>
            <person name="Cerdeno-Tarraga A.-M."/>
            <person name="Temple L."/>
            <person name="James K.D."/>
            <person name="Harris B."/>
            <person name="Quail M.A."/>
            <person name="Achtman M."/>
            <person name="Atkin R."/>
            <person name="Baker S."/>
            <person name="Basham D."/>
            <person name="Bason N."/>
            <person name="Cherevach I."/>
            <person name="Chillingworth T."/>
            <person name="Collins M."/>
            <person name="Cronin A."/>
            <person name="Davis P."/>
            <person name="Doggett J."/>
            <person name="Feltwell T."/>
            <person name="Goble A."/>
            <person name="Hamlin N."/>
            <person name="Hauser H."/>
            <person name="Holroyd S."/>
            <person name="Jagels K."/>
            <person name="Leather S."/>
            <person name="Moule S."/>
            <person name="Norberczak H."/>
            <person name="O'Neil S."/>
            <person name="Ormond D."/>
            <person name="Price C."/>
            <person name="Rabbinowitsch E."/>
            <person name="Rutter S."/>
            <person name="Sanders M."/>
            <person name="Saunders D."/>
            <person name="Seeger K."/>
            <person name="Sharp S."/>
            <person name="Simmonds M."/>
            <person name="Skelton J."/>
            <person name="Squares R."/>
            <person name="Squares S."/>
            <person name="Stevens K."/>
            <person name="Unwin L."/>
            <person name="Whitehead S."/>
            <person name="Barrell B.G."/>
            <person name="Maskell D.J."/>
        </authorList>
    </citation>
    <scope>NUCLEOTIDE SEQUENCE [LARGE SCALE GENOMIC DNA]</scope>
    <source>
        <strain>Tohama I / ATCC BAA-589 / NCTC 13251</strain>
    </source>
</reference>
<keyword id="KW-0997">Cell inner membrane</keyword>
<keyword id="KW-1003">Cell membrane</keyword>
<keyword id="KW-0378">Hydrolase</keyword>
<keyword id="KW-0441">Lipid A biosynthesis</keyword>
<keyword id="KW-0444">Lipid biosynthesis</keyword>
<keyword id="KW-0443">Lipid metabolism</keyword>
<keyword id="KW-0464">Manganese</keyword>
<keyword id="KW-0472">Membrane</keyword>
<keyword id="KW-0479">Metal-binding</keyword>
<keyword id="KW-1185">Reference proteome</keyword>
<comment type="function">
    <text evidence="1">Hydrolyzes the pyrophosphate bond of UDP-2,3-diacylglucosamine to yield 2,3-diacylglucosamine 1-phosphate (lipid X) and UMP by catalyzing the attack of water at the alpha-P atom. Involved in the biosynthesis of lipid A, a phosphorylated glycolipid that anchors the lipopolysaccharide to the outer membrane of the cell.</text>
</comment>
<comment type="catalytic activity">
    <reaction evidence="1">
        <text>UDP-2-N,3-O-bis[(3R)-3-hydroxytetradecanoyl]-alpha-D-glucosamine + H2O = 2-N,3-O-bis[(3R)-3-hydroxytetradecanoyl]-alpha-D-glucosaminyl 1-phosphate + UMP + 2 H(+)</text>
        <dbReference type="Rhea" id="RHEA:25213"/>
        <dbReference type="ChEBI" id="CHEBI:15377"/>
        <dbReference type="ChEBI" id="CHEBI:15378"/>
        <dbReference type="ChEBI" id="CHEBI:57865"/>
        <dbReference type="ChEBI" id="CHEBI:57957"/>
        <dbReference type="ChEBI" id="CHEBI:78847"/>
        <dbReference type="EC" id="3.6.1.54"/>
    </reaction>
</comment>
<comment type="cofactor">
    <cofactor evidence="1">
        <name>Mn(2+)</name>
        <dbReference type="ChEBI" id="CHEBI:29035"/>
    </cofactor>
    <text evidence="1">Binds 2 Mn(2+) ions per subunit in a binuclear metal center.</text>
</comment>
<comment type="pathway">
    <text evidence="1">Glycolipid biosynthesis; lipid IV(A) biosynthesis; lipid IV(A) from (3R)-3-hydroxytetradecanoyl-[acyl-carrier-protein] and UDP-N-acetyl-alpha-D-glucosamine: step 4/6.</text>
</comment>
<comment type="subcellular location">
    <subcellularLocation>
        <location evidence="1">Cell inner membrane</location>
        <topology evidence="1">Peripheral membrane protein</topology>
        <orientation evidence="1">Cytoplasmic side</orientation>
    </subcellularLocation>
</comment>
<comment type="similarity">
    <text evidence="1">Belongs to the LpxH family.</text>
</comment>
<comment type="sequence caution" evidence="2">
    <conflict type="erroneous initiation">
        <sequence resource="EMBL-CDS" id="CAE42187"/>
    </conflict>
</comment>
<dbReference type="EC" id="3.6.1.54" evidence="1"/>
<dbReference type="EMBL" id="BX640416">
    <property type="protein sequence ID" value="CAE42187.1"/>
    <property type="status" value="ALT_INIT"/>
    <property type="molecule type" value="Genomic_DNA"/>
</dbReference>
<dbReference type="RefSeq" id="NP_880591.1">
    <property type="nucleotide sequence ID" value="NC_002929.2"/>
</dbReference>
<dbReference type="RefSeq" id="WP_019247344.1">
    <property type="nucleotide sequence ID" value="NZ_CP039022.1"/>
</dbReference>
<dbReference type="SMR" id="Q7VX99"/>
<dbReference type="STRING" id="257313.BP1905"/>
<dbReference type="PaxDb" id="257313-BP1905"/>
<dbReference type="KEGG" id="bpe:BP1905"/>
<dbReference type="PATRIC" id="fig|257313.5.peg.2045"/>
<dbReference type="eggNOG" id="COG2908">
    <property type="taxonomic scope" value="Bacteria"/>
</dbReference>
<dbReference type="HOGENOM" id="CLU_074586_0_0_4"/>
<dbReference type="UniPathway" id="UPA00359">
    <property type="reaction ID" value="UER00480"/>
</dbReference>
<dbReference type="Proteomes" id="UP000002676">
    <property type="component" value="Chromosome"/>
</dbReference>
<dbReference type="GO" id="GO:0005737">
    <property type="term" value="C:cytoplasm"/>
    <property type="evidence" value="ECO:0007669"/>
    <property type="project" value="InterPro"/>
</dbReference>
<dbReference type="GO" id="GO:0019897">
    <property type="term" value="C:extrinsic component of plasma membrane"/>
    <property type="evidence" value="ECO:0007669"/>
    <property type="project" value="UniProtKB-UniRule"/>
</dbReference>
<dbReference type="GO" id="GO:0030145">
    <property type="term" value="F:manganese ion binding"/>
    <property type="evidence" value="ECO:0007669"/>
    <property type="project" value="UniProtKB-UniRule"/>
</dbReference>
<dbReference type="GO" id="GO:0008758">
    <property type="term" value="F:UDP-2,3-diacylglucosamine hydrolase activity"/>
    <property type="evidence" value="ECO:0007669"/>
    <property type="project" value="UniProtKB-UniRule"/>
</dbReference>
<dbReference type="GO" id="GO:0009245">
    <property type="term" value="P:lipid A biosynthetic process"/>
    <property type="evidence" value="ECO:0007669"/>
    <property type="project" value="UniProtKB-UniRule"/>
</dbReference>
<dbReference type="CDD" id="cd07398">
    <property type="entry name" value="MPP_YbbF-LpxH"/>
    <property type="match status" value="1"/>
</dbReference>
<dbReference type="Gene3D" id="3.60.21.10">
    <property type="match status" value="1"/>
</dbReference>
<dbReference type="HAMAP" id="MF_00575">
    <property type="entry name" value="LpxH"/>
    <property type="match status" value="1"/>
</dbReference>
<dbReference type="InterPro" id="IPR004843">
    <property type="entry name" value="Calcineurin-like_PHP_ApaH"/>
</dbReference>
<dbReference type="InterPro" id="IPR043461">
    <property type="entry name" value="LpxH-like"/>
</dbReference>
<dbReference type="InterPro" id="IPR029052">
    <property type="entry name" value="Metallo-depent_PP-like"/>
</dbReference>
<dbReference type="InterPro" id="IPR010138">
    <property type="entry name" value="UDP-diacylglucosamine_Hdrlase"/>
</dbReference>
<dbReference type="NCBIfam" id="TIGR01854">
    <property type="entry name" value="lipid_A_lpxH"/>
    <property type="match status" value="1"/>
</dbReference>
<dbReference type="NCBIfam" id="NF003743">
    <property type="entry name" value="PRK05340.1"/>
    <property type="match status" value="1"/>
</dbReference>
<dbReference type="PANTHER" id="PTHR34990:SF1">
    <property type="entry name" value="UDP-2,3-DIACYLGLUCOSAMINE HYDROLASE"/>
    <property type="match status" value="1"/>
</dbReference>
<dbReference type="PANTHER" id="PTHR34990">
    <property type="entry name" value="UDP-2,3-DIACYLGLUCOSAMINE HYDROLASE-RELATED"/>
    <property type="match status" value="1"/>
</dbReference>
<dbReference type="Pfam" id="PF00149">
    <property type="entry name" value="Metallophos"/>
    <property type="match status" value="1"/>
</dbReference>
<dbReference type="SUPFAM" id="SSF56300">
    <property type="entry name" value="Metallo-dependent phosphatases"/>
    <property type="match status" value="1"/>
</dbReference>
<accession>Q7VX99</accession>
<sequence>MNKLALQGPLWLASDLHLGPATPATAEAFLGLLQAAADEASALLLPGDIFDAWIGDDVIRAAPPWLAAVLHGIRAAAGRIPVYLGRGNRDFLIGQELADALGAHLLPEPVLLETDYGRILLTHGDEYCTDDSAYQQFRAMVRNPQWQAQFLAKSIPERLAMAEQARGESQAANQAKSMEIMDVNPAAVEAALREADVDVLVHGHTHRPARHVLSVDGRKRERWVLPDWDCDHADPPRGGWLVIDRDGLQCFDLVEDED</sequence>
<proteinExistence type="inferred from homology"/>
<name>LPXH_BORPE</name>
<protein>
    <recommendedName>
        <fullName evidence="1">UDP-2,3-diacylglucosamine hydrolase</fullName>
        <ecNumber evidence="1">3.6.1.54</ecNumber>
    </recommendedName>
    <alternativeName>
        <fullName evidence="1">UDP-2,3-diacylglucosamine diphosphatase</fullName>
    </alternativeName>
</protein>
<organism>
    <name type="scientific">Bordetella pertussis (strain Tohama I / ATCC BAA-589 / NCTC 13251)</name>
    <dbReference type="NCBI Taxonomy" id="257313"/>
    <lineage>
        <taxon>Bacteria</taxon>
        <taxon>Pseudomonadati</taxon>
        <taxon>Pseudomonadota</taxon>
        <taxon>Betaproteobacteria</taxon>
        <taxon>Burkholderiales</taxon>
        <taxon>Alcaligenaceae</taxon>
        <taxon>Bordetella</taxon>
    </lineage>
</organism>
<feature type="chain" id="PRO_0000214104" description="UDP-2,3-diacylglucosamine hydrolase">
    <location>
        <begin position="1"/>
        <end position="258"/>
    </location>
</feature>
<feature type="binding site" evidence="1">
    <location>
        <position position="15"/>
    </location>
    <ligand>
        <name>Mn(2+)</name>
        <dbReference type="ChEBI" id="CHEBI:29035"/>
        <label>1</label>
    </ligand>
</feature>
<feature type="binding site" evidence="1">
    <location>
        <position position="17"/>
    </location>
    <ligand>
        <name>Mn(2+)</name>
        <dbReference type="ChEBI" id="CHEBI:29035"/>
        <label>1</label>
    </ligand>
</feature>
<feature type="binding site" evidence="1">
    <location>
        <position position="48"/>
    </location>
    <ligand>
        <name>Mn(2+)</name>
        <dbReference type="ChEBI" id="CHEBI:29035"/>
        <label>1</label>
    </ligand>
</feature>
<feature type="binding site" evidence="1">
    <location>
        <position position="48"/>
    </location>
    <ligand>
        <name>Mn(2+)</name>
        <dbReference type="ChEBI" id="CHEBI:29035"/>
        <label>2</label>
    </ligand>
</feature>
<feature type="binding site" evidence="1">
    <location>
        <begin position="88"/>
        <end position="89"/>
    </location>
    <ligand>
        <name>substrate</name>
    </ligand>
</feature>
<feature type="binding site" evidence="1">
    <location>
        <position position="88"/>
    </location>
    <ligand>
        <name>Mn(2+)</name>
        <dbReference type="ChEBI" id="CHEBI:29035"/>
        <label>2</label>
    </ligand>
</feature>
<feature type="binding site" evidence="1">
    <location>
        <position position="123"/>
    </location>
    <ligand>
        <name>Mn(2+)</name>
        <dbReference type="ChEBI" id="CHEBI:29035"/>
        <label>2</label>
    </ligand>
</feature>
<feature type="binding site" evidence="1">
    <location>
        <position position="131"/>
    </location>
    <ligand>
        <name>substrate</name>
    </ligand>
</feature>
<feature type="binding site" evidence="1">
    <location>
        <position position="169"/>
    </location>
    <ligand>
        <name>substrate</name>
    </ligand>
</feature>
<feature type="binding site" evidence="1">
    <location>
        <position position="173"/>
    </location>
    <ligand>
        <name>substrate</name>
    </ligand>
</feature>
<feature type="binding site" evidence="1">
    <location>
        <position position="176"/>
    </location>
    <ligand>
        <name>substrate</name>
    </ligand>
</feature>
<feature type="binding site" evidence="1">
    <location>
        <position position="204"/>
    </location>
    <ligand>
        <name>Mn(2+)</name>
        <dbReference type="ChEBI" id="CHEBI:29035"/>
        <label>2</label>
    </ligand>
</feature>
<feature type="binding site" evidence="1">
    <location>
        <position position="204"/>
    </location>
    <ligand>
        <name>substrate</name>
    </ligand>
</feature>
<feature type="binding site" evidence="1">
    <location>
        <position position="206"/>
    </location>
    <ligand>
        <name>Mn(2+)</name>
        <dbReference type="ChEBI" id="CHEBI:29035"/>
        <label>1</label>
    </ligand>
</feature>
<gene>
    <name evidence="1" type="primary">lpxH</name>
    <name type="ordered locus">BP1905</name>
</gene>